<protein>
    <recommendedName>
        <fullName evidence="1">UPF0227 protein YcfP</fullName>
    </recommendedName>
</protein>
<sequence length="180" mass="21226">MIIYLHGFDSNSPGNHEKVLQLQFIDPDVRLISYSTRHPKHDMQHLLKEVDKMLQLNVDERPLICGVGLGGYWAERIGFLCDIRQVIFNPNLFPYENMEGKIDRPEEYADIATKCVTNFREKNRDRCLVILSRNDEALNSQRTSEELHHYYEIVWDEEQTHKFKNISPHLQRIKAFKTLG</sequence>
<feature type="chain" id="PRO_1000136184" description="UPF0227 protein YcfP">
    <location>
        <begin position="1"/>
        <end position="180"/>
    </location>
</feature>
<name>YCFP_ECO45</name>
<keyword id="KW-1185">Reference proteome</keyword>
<accession>B7MJ95</accession>
<evidence type="ECO:0000255" key="1">
    <source>
        <dbReference type="HAMAP-Rule" id="MF_01047"/>
    </source>
</evidence>
<proteinExistence type="inferred from homology"/>
<gene>
    <name evidence="1" type="primary">ycfP</name>
    <name type="ordered locus">ECS88_1122</name>
</gene>
<comment type="similarity">
    <text evidence="1">Belongs to the UPF0227 family.</text>
</comment>
<dbReference type="EMBL" id="CU928161">
    <property type="protein sequence ID" value="CAR02448.1"/>
    <property type="molecule type" value="Genomic_DNA"/>
</dbReference>
<dbReference type="RefSeq" id="WP_000587933.1">
    <property type="nucleotide sequence ID" value="NC_011742.1"/>
</dbReference>
<dbReference type="SMR" id="B7MJ95"/>
<dbReference type="ESTHER" id="ecoli-ycfp">
    <property type="family name" value="abh_upf00227"/>
</dbReference>
<dbReference type="GeneID" id="93776300"/>
<dbReference type="KEGG" id="ecz:ECS88_1122"/>
<dbReference type="HOGENOM" id="CLU_128769_0_0_6"/>
<dbReference type="Proteomes" id="UP000000747">
    <property type="component" value="Chromosome"/>
</dbReference>
<dbReference type="FunFam" id="3.40.50.1820:FF:000007">
    <property type="entry name" value="UPF0227 protein YcfP"/>
    <property type="match status" value="1"/>
</dbReference>
<dbReference type="Gene3D" id="3.40.50.1820">
    <property type="entry name" value="alpha/beta hydrolase"/>
    <property type="match status" value="1"/>
</dbReference>
<dbReference type="HAMAP" id="MF_01047">
    <property type="entry name" value="UPF0227"/>
    <property type="match status" value="1"/>
</dbReference>
<dbReference type="InterPro" id="IPR029058">
    <property type="entry name" value="AB_hydrolase_fold"/>
</dbReference>
<dbReference type="InterPro" id="IPR022987">
    <property type="entry name" value="UPF0227"/>
</dbReference>
<dbReference type="InterPro" id="IPR008886">
    <property type="entry name" value="UPF0227/Esterase_YqiA"/>
</dbReference>
<dbReference type="NCBIfam" id="NF003431">
    <property type="entry name" value="PRK04940.1"/>
    <property type="match status" value="1"/>
</dbReference>
<dbReference type="PANTHER" id="PTHR35602">
    <property type="entry name" value="ESTERASE YQIA-RELATED"/>
    <property type="match status" value="1"/>
</dbReference>
<dbReference type="PANTHER" id="PTHR35602:SF2">
    <property type="entry name" value="UPF0227 PROTEIN YCFP"/>
    <property type="match status" value="1"/>
</dbReference>
<dbReference type="Pfam" id="PF05728">
    <property type="entry name" value="UPF0227"/>
    <property type="match status" value="1"/>
</dbReference>
<dbReference type="SUPFAM" id="SSF53474">
    <property type="entry name" value="alpha/beta-Hydrolases"/>
    <property type="match status" value="1"/>
</dbReference>
<organism>
    <name type="scientific">Escherichia coli O45:K1 (strain S88 / ExPEC)</name>
    <dbReference type="NCBI Taxonomy" id="585035"/>
    <lineage>
        <taxon>Bacteria</taxon>
        <taxon>Pseudomonadati</taxon>
        <taxon>Pseudomonadota</taxon>
        <taxon>Gammaproteobacteria</taxon>
        <taxon>Enterobacterales</taxon>
        <taxon>Enterobacteriaceae</taxon>
        <taxon>Escherichia</taxon>
    </lineage>
</organism>
<reference key="1">
    <citation type="journal article" date="2009" name="PLoS Genet.">
        <title>Organised genome dynamics in the Escherichia coli species results in highly diverse adaptive paths.</title>
        <authorList>
            <person name="Touchon M."/>
            <person name="Hoede C."/>
            <person name="Tenaillon O."/>
            <person name="Barbe V."/>
            <person name="Baeriswyl S."/>
            <person name="Bidet P."/>
            <person name="Bingen E."/>
            <person name="Bonacorsi S."/>
            <person name="Bouchier C."/>
            <person name="Bouvet O."/>
            <person name="Calteau A."/>
            <person name="Chiapello H."/>
            <person name="Clermont O."/>
            <person name="Cruveiller S."/>
            <person name="Danchin A."/>
            <person name="Diard M."/>
            <person name="Dossat C."/>
            <person name="Karoui M.E."/>
            <person name="Frapy E."/>
            <person name="Garry L."/>
            <person name="Ghigo J.M."/>
            <person name="Gilles A.M."/>
            <person name="Johnson J."/>
            <person name="Le Bouguenec C."/>
            <person name="Lescat M."/>
            <person name="Mangenot S."/>
            <person name="Martinez-Jehanne V."/>
            <person name="Matic I."/>
            <person name="Nassif X."/>
            <person name="Oztas S."/>
            <person name="Petit M.A."/>
            <person name="Pichon C."/>
            <person name="Rouy Z."/>
            <person name="Ruf C.S."/>
            <person name="Schneider D."/>
            <person name="Tourret J."/>
            <person name="Vacherie B."/>
            <person name="Vallenet D."/>
            <person name="Medigue C."/>
            <person name="Rocha E.P.C."/>
            <person name="Denamur E."/>
        </authorList>
    </citation>
    <scope>NUCLEOTIDE SEQUENCE [LARGE SCALE GENOMIC DNA]</scope>
    <source>
        <strain>S88 / ExPEC</strain>
    </source>
</reference>